<accession>P08839</accession>
<organism>
    <name type="scientific">Escherichia coli (strain K12)</name>
    <dbReference type="NCBI Taxonomy" id="83333"/>
    <lineage>
        <taxon>Bacteria</taxon>
        <taxon>Pseudomonadati</taxon>
        <taxon>Pseudomonadota</taxon>
        <taxon>Gammaproteobacteria</taxon>
        <taxon>Enterobacterales</taxon>
        <taxon>Enterobacteriaceae</taxon>
        <taxon>Escherichia</taxon>
    </lineage>
</organism>
<reference key="1">
    <citation type="journal article" date="1987" name="J. Biol. Chem.">
        <title>Sugar transport by the bacterial phosphotransferase system. Molecular cloning and structural analysis of the Escherichia coli ptsH, ptsI, and crr genes.</title>
        <authorList>
            <person name="Saffen D.W."/>
            <person name="Presper K.A."/>
            <person name="Doering T.L."/>
            <person name="Roseman S."/>
        </authorList>
    </citation>
    <scope>NUCLEOTIDE SEQUENCE [GENOMIC DNA]</scope>
</reference>
<reference key="2">
    <citation type="journal article" date="1988" name="J. Bacteriol.">
        <title>The ptsH, ptsI, and crr genes of the Escherichia coli phosphoenolpyruvate-dependent phosphotransferase system: a complex operon with several modes of transcription.</title>
        <authorList>
            <person name="de Reuse H."/>
            <person name="Danchin A."/>
        </authorList>
    </citation>
    <scope>NUCLEOTIDE SEQUENCE [GENOMIC DNA]</scope>
</reference>
<reference key="3">
    <citation type="journal article" date="1997" name="DNA Res.">
        <title>Construction of a contiguous 874-kb sequence of the Escherichia coli-K12 genome corresponding to 50.0-68.8 min on the linkage map and analysis of its sequence features.</title>
        <authorList>
            <person name="Yamamoto Y."/>
            <person name="Aiba H."/>
            <person name="Baba T."/>
            <person name="Hayashi K."/>
            <person name="Inada T."/>
            <person name="Isono K."/>
            <person name="Itoh T."/>
            <person name="Kimura S."/>
            <person name="Kitagawa M."/>
            <person name="Makino K."/>
            <person name="Miki T."/>
            <person name="Mitsuhashi N."/>
            <person name="Mizobuchi K."/>
            <person name="Mori H."/>
            <person name="Nakade S."/>
            <person name="Nakamura Y."/>
            <person name="Nashimoto H."/>
            <person name="Oshima T."/>
            <person name="Oyama S."/>
            <person name="Saito N."/>
            <person name="Sampei G."/>
            <person name="Satoh Y."/>
            <person name="Sivasundaram S."/>
            <person name="Tagami H."/>
            <person name="Takahashi H."/>
            <person name="Takeda J."/>
            <person name="Takemoto K."/>
            <person name="Uehara K."/>
            <person name="Wada C."/>
            <person name="Yamagata S."/>
            <person name="Horiuchi T."/>
        </authorList>
    </citation>
    <scope>NUCLEOTIDE SEQUENCE [LARGE SCALE GENOMIC DNA]</scope>
    <source>
        <strain>K12 / W3110 / ATCC 27325 / DSM 5911</strain>
    </source>
</reference>
<reference key="4">
    <citation type="journal article" date="1997" name="Science">
        <title>The complete genome sequence of Escherichia coli K-12.</title>
        <authorList>
            <person name="Blattner F.R."/>
            <person name="Plunkett G. III"/>
            <person name="Bloch C.A."/>
            <person name="Perna N.T."/>
            <person name="Burland V."/>
            <person name="Riley M."/>
            <person name="Collado-Vides J."/>
            <person name="Glasner J.D."/>
            <person name="Rode C.K."/>
            <person name="Mayhew G.F."/>
            <person name="Gregor J."/>
            <person name="Davis N.W."/>
            <person name="Kirkpatrick H.A."/>
            <person name="Goeden M.A."/>
            <person name="Rose D.J."/>
            <person name="Mau B."/>
            <person name="Shao Y."/>
        </authorList>
    </citation>
    <scope>NUCLEOTIDE SEQUENCE [LARGE SCALE GENOMIC DNA]</scope>
    <source>
        <strain>K12 / MG1655 / ATCC 47076</strain>
    </source>
</reference>
<reference key="5">
    <citation type="journal article" date="2006" name="Mol. Syst. Biol.">
        <title>Highly accurate genome sequences of Escherichia coli K-12 strains MG1655 and W3110.</title>
        <authorList>
            <person name="Hayashi K."/>
            <person name="Morooka N."/>
            <person name="Yamamoto Y."/>
            <person name="Fujita K."/>
            <person name="Isono K."/>
            <person name="Choi S."/>
            <person name="Ohtsubo E."/>
            <person name="Baba T."/>
            <person name="Wanner B.L."/>
            <person name="Mori H."/>
            <person name="Horiuchi T."/>
        </authorList>
    </citation>
    <scope>NUCLEOTIDE SEQUENCE [LARGE SCALE GENOMIC DNA]</scope>
    <source>
        <strain>K12 / W3110 / ATCC 27325 / DSM 5911</strain>
    </source>
</reference>
<reference key="6">
    <citation type="journal article" date="1985" name="Gene">
        <title>Analysis of the ptsH-ptsI-crr region in Escherichia coli K-12: nucleotide sequence of the ptsH gene.</title>
        <authorList>
            <person name="de Reuse H."/>
            <person name="Roy A."/>
            <person name="Danchin A."/>
        </authorList>
    </citation>
    <scope>NUCLEOTIDE SEQUENCE [GENOMIC DNA] OF 1-56</scope>
</reference>
<reference key="7">
    <citation type="journal article" date="1988" name="J. Bacteriol.">
        <title>DNA sequences of the cysK regions of Salmonella typhimurium and Escherichia coli and linkage of the cysK regions to ptsH.</title>
        <authorList>
            <person name="Byrne C.R."/>
            <person name="Monroe R.S."/>
            <person name="Ward K.A."/>
            <person name="Kredich N.M."/>
        </authorList>
    </citation>
    <scope>NUCLEOTIDE SEQUENCE [GENOMIC DNA] OF 1-54</scope>
    <source>
        <strain>K12</strain>
    </source>
</reference>
<reference key="8">
    <citation type="journal article" date="1997" name="Electrophoresis">
        <title>Comparing the predicted and observed properties of proteins encoded in the genome of Escherichia coli K-12.</title>
        <authorList>
            <person name="Link A.J."/>
            <person name="Robison K."/>
            <person name="Church G.M."/>
        </authorList>
    </citation>
    <scope>PROTEIN SEQUENCE OF 1-11</scope>
    <source>
        <strain>K12 / EMG2</strain>
    </source>
</reference>
<reference key="9">
    <citation type="journal article" date="1995" name="J. Biol. Chem.">
        <title>Novel proteins of the phosphotransferase system encoded within the rpoN operon of Escherichia coli. Enzyme IIANtr affects growth on organic nitrogen and the conditional lethality of an erats mutant.</title>
        <authorList>
            <person name="Powell B.S."/>
            <person name="Court D.L."/>
            <person name="Inada T."/>
            <person name="Nakamura Y."/>
            <person name="Michotey V."/>
            <person name="Cui X."/>
            <person name="Reizer A."/>
            <person name="Saier M.H. Jr."/>
            <person name="Reizer J."/>
        </authorList>
    </citation>
    <scope>FUNCTION IN NITROGEN-METABOLIC PTS</scope>
</reference>
<reference key="10">
    <citation type="journal article" date="1997" name="Electrophoresis">
        <title>Escherichia coli proteome analysis using the gene-protein database.</title>
        <authorList>
            <person name="VanBogelen R.A."/>
            <person name="Abshire K.Z."/>
            <person name="Moldover B."/>
            <person name="Olson E.R."/>
            <person name="Neidhardt F.C."/>
        </authorList>
    </citation>
    <scope>IDENTIFICATION BY 2D-GEL</scope>
</reference>
<reference key="11">
    <citation type="journal article" date="2003" name="Biochemistry">
        <title>Enzyme I of the phosphotransferase system: induced-fit protonation of the reaction transition state by Cys-502.</title>
        <authorList>
            <person name="Garcia-Alles L.F."/>
            <person name="Alfonso I."/>
            <person name="Erni B."/>
        </authorList>
    </citation>
    <scope>FUNCTION</scope>
    <scope>CATALYTIC ACTIVITY</scope>
    <scope>BIOPHYSICOCHEMICAL PROPERTIES</scope>
    <scope>MUTAGENESIS OF HIS-189 AND CYS-502</scope>
    <scope>ACTIVITY REGULATION</scope>
    <scope>SUBSTRATE SPECIFICITY</scope>
    <scope>ACTIVE SITE</scope>
    <scope>SUBUNIT</scope>
</reference>
<reference key="12">
    <citation type="journal article" date="2021" name="Proc. Natl. Acad. Sci. U.S.A.">
        <title>Tyrosine phosphorylation-dependent localization of TmaR that controls activity of a major bacterial sugar regulator by polar sequestration.</title>
        <authorList>
            <person name="Szoke T."/>
            <person name="Albocher N."/>
            <person name="Govindarajan S."/>
            <person name="Nussbaum-Shochat A."/>
            <person name="Amster-Choder O."/>
        </authorList>
    </citation>
    <scope>INTERACTION WITH TMAR</scope>
    <scope>SUBCELLULAR LOCATION</scope>
    <scope>PHOSPHORYLATION AT TYR-122</scope>
    <scope>MUTAGENESIS OF TYR-122</scope>
    <source>
        <strain>K12 / BW25113</strain>
    </source>
</reference>
<reference key="13">
    <citation type="journal article" date="1996" name="Structure">
        <title>The first step in sugar transport: crystal structure of the amino terminal domain of enzyme I of the E. coli PEP: sugar phosphotransferase system and a model of the phosphotransfer complex with HPr.</title>
        <authorList>
            <person name="Liao D.-I."/>
            <person name="Silverton E."/>
            <person name="Seok Y.-J."/>
            <person name="Lee B.R."/>
            <person name="Peterkofsky A."/>
            <person name="Davies D.R."/>
        </authorList>
    </citation>
    <scope>X-RAY CRYSTALLOGRAPHY (2.5 ANGSTROMS) OF 1-259</scope>
</reference>
<reference key="14">
    <citation type="journal article" date="1997" name="Biochemistry">
        <title>Solution structure of the 30 kDa N-terminal domain of enzyme I of the Escherichia coli phosphoenolpyruvate:sugar phosphotransferase system by multidimensional NMR.</title>
        <authorList>
            <person name="Garrett D.S."/>
            <person name="Seok Y.-J."/>
            <person name="Liao D.-I."/>
            <person name="Peterkofsky A."/>
            <person name="Gronenborn A.M."/>
            <person name="Clore G.M."/>
        </authorList>
    </citation>
    <scope>STRUCTURE BY NMR OF 1-259</scope>
</reference>
<reference key="15">
    <citation type="journal article" date="1998" name="Protein Sci.">
        <title>Tautomeric state and pKa of the phosphorylated active site histidine in the N-terminal domain of enzyme I of the Escherichia coli phosphoenolpyruvate:sugar phosphotransferase system.</title>
        <authorList>
            <person name="Garrett D.S."/>
            <person name="Seok Y.-J."/>
            <person name="Peterkofsky A."/>
            <person name="Clore G.M."/>
            <person name="Gronenborn A.M."/>
        </authorList>
    </citation>
    <scope>STRUCTURE BY NMR OF 1-259</scope>
</reference>
<reference key="16">
    <citation type="journal article" date="1999" name="Nat. Struct. Biol.">
        <title>Solution structure of the 40,000 Mr phosphoryl transfer complex between the N-terminal domain of enzyme I and HPr.</title>
        <authorList>
            <person name="Garrett D.S."/>
            <person name="Seok Y.-J."/>
            <person name="Peterkofsky A."/>
            <person name="Gronenborn A.M."/>
            <person name="Clore G.M."/>
        </authorList>
    </citation>
    <scope>STRUCTURE BY NMR OF 1-259</scope>
</reference>
<reference key="17">
    <citation type="journal article" date="2006" name="Proc. Natl. Acad. Sci. U.S.A.">
        <title>Structure of phosphorylated enzyme I, the phosphoenolpyruvate:sugar phosphotransferase system sugar translocation signal protein.</title>
        <authorList>
            <person name="Teplyakov A."/>
            <person name="Lim K."/>
            <person name="Zhu P.-P."/>
            <person name="Kapadia G."/>
            <person name="Chen C.C.H."/>
            <person name="Schwartz J."/>
            <person name="Howard A."/>
            <person name="Reddy P.T."/>
            <person name="Peterkofsky A."/>
            <person name="Herzberg O."/>
        </authorList>
    </citation>
    <scope>X-RAY CRYSTALLOGRAPHY (2.7 ANGSTROMS) IN COMPLEX WITH SUBSTRATE ANALOG AND MAGNESIUM IONS</scope>
    <scope>FUNCTION</scope>
    <scope>COFACTOR</scope>
    <scope>SUBUNIT</scope>
    <scope>ACTIVE SITE</scope>
    <scope>REACTION MECHANISM</scope>
</reference>
<sequence>MISGILASPGIAFGKALLLKEDEIVIDRKKISADQVDQEVERFLSGRAKASAQLETIKTKAGETFGEEKEAIFEGHIMLLEDEELEQEIIALIKDKHMTADAAAHEVIEGQASALEELDDEYLKERAADVRDIGKRLLRNILGLKIIDLSAIQDEVILVAADLTPSETAQLNLKKVLGFITDAGGRTSHTSIMARSLELPAIVGTGSVTSQVKNDDYLILDAVNNQVYVNPTNEVIDKMRAVQEQVASEKAELAKLKDLPAITLDGHQVEVCANIGTVRDVEGAERNGAEGVGLYRTEFLFMDRDALPTEEEQFAAYKAVAEACGSQAVIVRTMDIGGDKELPYMNFPKEENPFLGWRAIRIAMDRREILRDQLRAILRASAFGKLRIMFPMIISVEEVRALRKEIEIYKQELRDEGKAFDESIEIGVMVETPAAATIARHLAKEVDFFSIGTNDLTQYTLAVDRGNDMISHLYQPMSPSVLNLIKQVIDASHAEGKWTGMCGELAGDERATLLLLGMGLDEFSMSAISIPRIKKIIRNTNFEDAKVLAEQALAQPTTDELMTLVNKFIEEKTIC</sequence>
<keyword id="KW-0002">3D-structure</keyword>
<keyword id="KW-0963">Cytoplasm</keyword>
<keyword id="KW-0903">Direct protein sequencing</keyword>
<keyword id="KW-0418">Kinase</keyword>
<keyword id="KW-0460">Magnesium</keyword>
<keyword id="KW-0479">Metal-binding</keyword>
<keyword id="KW-0597">Phosphoprotein</keyword>
<keyword id="KW-0598">Phosphotransferase system</keyword>
<keyword id="KW-1185">Reference proteome</keyword>
<keyword id="KW-0762">Sugar transport</keyword>
<keyword id="KW-0808">Transferase</keyword>
<keyword id="KW-0813">Transport</keyword>
<evidence type="ECO:0000250" key="1">
    <source>
        <dbReference type="UniProtKB" id="P23533"/>
    </source>
</evidence>
<evidence type="ECO:0000269" key="2">
    <source>
    </source>
</evidence>
<evidence type="ECO:0000269" key="3">
    <source>
    </source>
</evidence>
<evidence type="ECO:0000269" key="4">
    <source>
    </source>
</evidence>
<evidence type="ECO:0000269" key="5">
    <source>
    </source>
</evidence>
<evidence type="ECO:0000303" key="6">
    <source>
    </source>
</evidence>
<evidence type="ECO:0000305" key="7"/>
<evidence type="ECO:0000305" key="8">
    <source>
    </source>
</evidence>
<evidence type="ECO:0000305" key="9">
    <source>
    </source>
</evidence>
<evidence type="ECO:0007829" key="10">
    <source>
        <dbReference type="PDB" id="1ZYM"/>
    </source>
</evidence>
<evidence type="ECO:0007829" key="11">
    <source>
        <dbReference type="PDB" id="2HWG"/>
    </source>
</evidence>
<evidence type="ECO:0007829" key="12">
    <source>
        <dbReference type="PDB" id="3EZA"/>
    </source>
</evidence>
<evidence type="ECO:0007829" key="13">
    <source>
        <dbReference type="PDB" id="6V9K"/>
    </source>
</evidence>
<gene>
    <name evidence="6" type="primary">ptsI</name>
    <name type="ordered locus">b2416</name>
    <name type="ordered locus">JW2409</name>
</gene>
<feature type="chain" id="PRO_0000147067" description="Phosphoenolpyruvate-protein phosphotransferase">
    <location>
        <begin position="1"/>
        <end position="575"/>
    </location>
</feature>
<feature type="active site" description="Tele-phosphohistidine intermediate" evidence="2 3">
    <location>
        <position position="189"/>
    </location>
</feature>
<feature type="active site" description="Proton donor" evidence="2 8">
    <location>
        <position position="502"/>
    </location>
</feature>
<feature type="binding site" evidence="1">
    <location>
        <position position="296"/>
    </location>
    <ligand>
        <name>phosphoenolpyruvate</name>
        <dbReference type="ChEBI" id="CHEBI:58702"/>
    </ligand>
</feature>
<feature type="binding site" evidence="3">
    <location>
        <position position="332"/>
    </location>
    <ligand>
        <name>phosphoenolpyruvate</name>
        <dbReference type="ChEBI" id="CHEBI:58702"/>
    </ligand>
</feature>
<feature type="binding site" evidence="3">
    <location>
        <position position="431"/>
    </location>
    <ligand>
        <name>Mg(2+)</name>
        <dbReference type="ChEBI" id="CHEBI:18420"/>
    </ligand>
</feature>
<feature type="binding site" evidence="3">
    <location>
        <begin position="454"/>
        <end position="455"/>
    </location>
    <ligand>
        <name>phosphoenolpyruvate</name>
        <dbReference type="ChEBI" id="CHEBI:58702"/>
    </ligand>
</feature>
<feature type="binding site" evidence="3">
    <location>
        <position position="455"/>
    </location>
    <ligand>
        <name>Mg(2+)</name>
        <dbReference type="ChEBI" id="CHEBI:18420"/>
    </ligand>
</feature>
<feature type="binding site" evidence="1">
    <location>
        <position position="465"/>
    </location>
    <ligand>
        <name>phosphoenolpyruvate</name>
        <dbReference type="ChEBI" id="CHEBI:58702"/>
    </ligand>
</feature>
<feature type="modified residue" description="Phosphotyrosine" evidence="9">
    <location>
        <position position="122"/>
    </location>
</feature>
<feature type="mutagenesis site" description="Is not detected in polar clusters. Is completely diffused throughout the cytoplasm. Does not affect function in sugar uptake or interaction with TmaR." evidence="4">
    <original>Y</original>
    <variation>F</variation>
    <location>
        <position position="122"/>
    </location>
</feature>
<feature type="mutagenesis site" description="Very strong decrease of the affinity and catalytic efficiency for PEP. Inactive; when associated with A-502." evidence="2">
    <original>H</original>
    <variation>A</variation>
    <location>
        <position position="189"/>
    </location>
</feature>
<feature type="mutagenesis site" description="Inactive; when associated with A-189." evidence="2">
    <original>C</original>
    <variation>A</variation>
    <location>
        <position position="502"/>
    </location>
</feature>
<feature type="strand" evidence="11">
    <location>
        <begin position="5"/>
        <end position="8"/>
    </location>
</feature>
<feature type="strand" evidence="10">
    <location>
        <begin position="12"/>
        <end position="18"/>
    </location>
</feature>
<feature type="turn" evidence="10">
    <location>
        <begin position="33"/>
        <end position="35"/>
    </location>
</feature>
<feature type="helix" evidence="10">
    <location>
        <begin position="36"/>
        <end position="65"/>
    </location>
</feature>
<feature type="helix" evidence="10">
    <location>
        <begin position="67"/>
        <end position="80"/>
    </location>
</feature>
<feature type="helix" evidence="10">
    <location>
        <begin position="83"/>
        <end position="96"/>
    </location>
</feature>
<feature type="helix" evidence="10">
    <location>
        <begin position="100"/>
        <end position="112"/>
    </location>
</feature>
<feature type="turn" evidence="10">
    <location>
        <begin position="113"/>
        <end position="115"/>
    </location>
</feature>
<feature type="strand" evidence="10">
    <location>
        <begin position="116"/>
        <end position="118"/>
    </location>
</feature>
<feature type="helix" evidence="10">
    <location>
        <begin position="121"/>
        <end position="142"/>
    </location>
</feature>
<feature type="helix" evidence="10">
    <location>
        <begin position="149"/>
        <end position="151"/>
    </location>
</feature>
<feature type="strand" evidence="10">
    <location>
        <begin position="156"/>
        <end position="159"/>
    </location>
</feature>
<feature type="helix" evidence="10">
    <location>
        <begin position="165"/>
        <end position="170"/>
    </location>
</feature>
<feature type="helix" evidence="10">
    <location>
        <begin position="173"/>
        <end position="175"/>
    </location>
</feature>
<feature type="strand" evidence="10">
    <location>
        <begin position="176"/>
        <end position="180"/>
    </location>
</feature>
<feature type="strand" evidence="12">
    <location>
        <begin position="183"/>
        <end position="185"/>
    </location>
</feature>
<feature type="strand" evidence="10">
    <location>
        <begin position="186"/>
        <end position="188"/>
    </location>
</feature>
<feature type="helix" evidence="10">
    <location>
        <begin position="189"/>
        <end position="197"/>
    </location>
</feature>
<feature type="strand" evidence="11">
    <location>
        <begin position="201"/>
        <end position="203"/>
    </location>
</feature>
<feature type="helix" evidence="10">
    <location>
        <begin position="208"/>
        <end position="211"/>
    </location>
</feature>
<feature type="strand" evidence="10">
    <location>
        <begin position="217"/>
        <end position="220"/>
    </location>
</feature>
<feature type="turn" evidence="11">
    <location>
        <begin position="222"/>
        <end position="225"/>
    </location>
</feature>
<feature type="strand" evidence="10">
    <location>
        <begin position="227"/>
        <end position="230"/>
    </location>
</feature>
<feature type="helix" evidence="10">
    <location>
        <begin position="233"/>
        <end position="239"/>
    </location>
</feature>
<feature type="turn" evidence="10">
    <location>
        <begin position="240"/>
        <end position="243"/>
    </location>
</feature>
<feature type="helix" evidence="10">
    <location>
        <begin position="244"/>
        <end position="247"/>
    </location>
</feature>
<feature type="helix" evidence="11">
    <location>
        <begin position="254"/>
        <end position="256"/>
    </location>
</feature>
<feature type="strand" evidence="13">
    <location>
        <begin position="270"/>
        <end position="277"/>
    </location>
</feature>
<feature type="helix" evidence="13">
    <location>
        <begin position="280"/>
        <end position="286"/>
    </location>
</feature>
<feature type="strand" evidence="13">
    <location>
        <begin position="290"/>
        <end position="295"/>
    </location>
</feature>
<feature type="helix" evidence="13">
    <location>
        <begin position="298"/>
        <end position="300"/>
    </location>
</feature>
<feature type="strand" evidence="13">
    <location>
        <begin position="302"/>
        <end position="306"/>
    </location>
</feature>
<feature type="helix" evidence="13">
    <location>
        <begin position="310"/>
        <end position="323"/>
    </location>
</feature>
<feature type="turn" evidence="13">
    <location>
        <begin position="324"/>
        <end position="326"/>
    </location>
</feature>
<feature type="strand" evidence="13">
    <location>
        <begin position="327"/>
        <end position="332"/>
    </location>
</feature>
<feature type="strand" evidence="11">
    <location>
        <begin position="337"/>
        <end position="339"/>
    </location>
</feature>
<feature type="helix" evidence="13">
    <location>
        <begin position="343"/>
        <end position="345"/>
    </location>
</feature>
<feature type="helix" evidence="13">
    <location>
        <begin position="353"/>
        <end position="355"/>
    </location>
</feature>
<feature type="helix" evidence="13">
    <location>
        <begin position="360"/>
        <end position="365"/>
    </location>
</feature>
<feature type="helix" evidence="13">
    <location>
        <begin position="367"/>
        <end position="380"/>
    </location>
</feature>
<feature type="helix" evidence="13">
    <location>
        <begin position="381"/>
        <end position="383"/>
    </location>
</feature>
<feature type="strand" evidence="13">
    <location>
        <begin position="384"/>
        <end position="392"/>
    </location>
</feature>
<feature type="helix" evidence="13">
    <location>
        <begin position="396"/>
        <end position="416"/>
    </location>
</feature>
<feature type="strand" evidence="13">
    <location>
        <begin position="425"/>
        <end position="430"/>
    </location>
</feature>
<feature type="helix" evidence="13">
    <location>
        <begin position="433"/>
        <end position="437"/>
    </location>
</feature>
<feature type="helix" evidence="13">
    <location>
        <begin position="439"/>
        <end position="443"/>
    </location>
</feature>
<feature type="strand" evidence="13">
    <location>
        <begin position="446"/>
        <end position="451"/>
    </location>
</feature>
<feature type="helix" evidence="13">
    <location>
        <begin position="453"/>
        <end position="460"/>
    </location>
</feature>
<feature type="turn" evidence="13">
    <location>
        <begin position="468"/>
        <end position="470"/>
    </location>
</feature>
<feature type="helix" evidence="13">
    <location>
        <begin position="471"/>
        <end position="473"/>
    </location>
</feature>
<feature type="strand" evidence="11">
    <location>
        <begin position="476"/>
        <end position="478"/>
    </location>
</feature>
<feature type="helix" evidence="13">
    <location>
        <begin position="479"/>
        <end position="494"/>
    </location>
</feature>
<feature type="strand" evidence="13">
    <location>
        <begin position="498"/>
        <end position="501"/>
    </location>
</feature>
<feature type="helix" evidence="13">
    <location>
        <begin position="504"/>
        <end position="507"/>
    </location>
</feature>
<feature type="turn" evidence="13">
    <location>
        <begin position="509"/>
        <end position="511"/>
    </location>
</feature>
<feature type="helix" evidence="13">
    <location>
        <begin position="512"/>
        <end position="518"/>
    </location>
</feature>
<feature type="strand" evidence="13">
    <location>
        <begin position="522"/>
        <end position="525"/>
    </location>
</feature>
<feature type="helix" evidence="13">
    <location>
        <begin position="527"/>
        <end position="529"/>
    </location>
</feature>
<feature type="helix" evidence="13">
    <location>
        <begin position="530"/>
        <end position="538"/>
    </location>
</feature>
<feature type="helix" evidence="13">
    <location>
        <begin position="542"/>
        <end position="553"/>
    </location>
</feature>
<feature type="helix" evidence="13">
    <location>
        <begin position="558"/>
        <end position="569"/>
    </location>
</feature>
<protein>
    <recommendedName>
        <fullName evidence="6">Phosphoenolpyruvate-protein phosphotransferase</fullName>
        <ecNumber evidence="2">2.7.3.9</ecNumber>
    </recommendedName>
    <alternativeName>
        <fullName evidence="6">Phosphotransferase system, enzyme I</fullName>
    </alternativeName>
</protein>
<name>PT1_ECOLI</name>
<comment type="function">
    <text evidence="2 3 5">General (non sugar-specific) component of the phosphoenolpyruvate-dependent sugar phosphotransferase system (sugar PTS). This major carbohydrate active-transport system catalyzes the phosphorylation of incoming sugar substrates concomitantly with their translocation across the cell membrane. Enzyme I transfers the phosphoryl group from phosphoenolpyruvate (PEP) to the phosphoryl carrier protein (HPr) (PubMed:12705838, PubMed:17053069, PubMed:7876255). Can also use (Z)-3-fluoro-PEP (ZFPEP), (Z)-3-methyl-PEP (ZMePEP), (Z)-3-chloro-PEP (ZClPEP) and (E)-3-chloro-PEP (EClPEP) as alternative phosphoryl donors (PubMed:12705838).</text>
</comment>
<comment type="catalytic activity">
    <reaction evidence="2">
        <text>L-histidyl-[protein] + phosphoenolpyruvate = N(pros)-phospho-L-histidyl-[protein] + pyruvate</text>
        <dbReference type="Rhea" id="RHEA:23880"/>
        <dbReference type="Rhea" id="RHEA-COMP:9745"/>
        <dbReference type="Rhea" id="RHEA-COMP:9746"/>
        <dbReference type="ChEBI" id="CHEBI:15361"/>
        <dbReference type="ChEBI" id="CHEBI:29979"/>
        <dbReference type="ChEBI" id="CHEBI:58702"/>
        <dbReference type="ChEBI" id="CHEBI:64837"/>
        <dbReference type="EC" id="2.7.3.9"/>
    </reaction>
</comment>
<comment type="cofactor">
    <cofactor evidence="3">
        <name>Mg(2+)</name>
        <dbReference type="ChEBI" id="CHEBI:18420"/>
    </cofactor>
</comment>
<comment type="activity regulation">
    <text evidence="2">Inhibited by oxalate.</text>
</comment>
<comment type="biophysicochemical properties">
    <kinetics>
        <KM evidence="2">0.11 mM for ZFPEP</KM>
        <KM evidence="2">0.12 mM for EClPEP</KM>
        <KM evidence="2">0.14 mM for PEP</KM>
        <KM evidence="2">0.25 mM for ZClPEP</KM>
        <KM evidence="2">0.43 mM for ZMePEP</KM>
        <text evidence="2">kcat is 3830 min(-1) with PEP as substrate. kcat is 370 min(-1) with ZFPEP as substrate. kcat is 285 min(-1) with ZMePEP as substrate. kcat is 15.8 min(-1) with ZClPEP as substrate. kcat is 2.8 min(-1) with EClPEP as substrate.</text>
    </kinetics>
</comment>
<comment type="subunit">
    <text evidence="2 3 4">Homodimer (PubMed:12705838, PubMed:17053069). Interacts with the pole-localizer protein TmaR (PubMed:33376208). Binding to TmaR is reversible as long as TmaR can get phosphorylated, whereas binding to non-phosphorylated TmaR is very strong and shifts the equilibrium toward binding (PubMed:33376208).</text>
</comment>
<comment type="interaction">
    <interactant intactId="EBI-551533">
        <id>P08839</id>
    </interactant>
    <interactant intactId="EBI-545674">
        <id>P11989</id>
        <label>bglG</label>
    </interactant>
    <organismsDiffer>false</organismsDiffer>
    <experiments>3</experiments>
</comment>
<comment type="interaction">
    <interactant intactId="EBI-551533">
        <id>P08839</id>
    </interactant>
    <interactant intactId="EBI-902853">
        <id>P0AA04</id>
        <label>ptsH</label>
    </interactant>
    <organismsDiffer>false</organismsDiffer>
    <experiments>4</experiments>
</comment>
<comment type="interaction">
    <interactant intactId="EBI-551533">
        <id>P08839</id>
    </interactant>
    <interactant intactId="EBI-551533">
        <id>P08839</id>
        <label>ptsI</label>
    </interactant>
    <organismsDiffer>false</organismsDiffer>
    <experiments>2</experiments>
</comment>
<comment type="subcellular location">
    <subcellularLocation>
        <location evidence="4">Cytoplasm</location>
    </subcellularLocation>
    <text evidence="4">Localizes mainly near one pole of the cell (PubMed:33376208). Localization at the pole requires phosphorylation at Tyr-122 and is controlled by the pole-localizer protein TmaR (PubMed:33376208).</text>
</comment>
<comment type="domain">
    <text evidence="3">The N-terminal domain contains the HPr binding site, the central domain the pyrophosphate/phosphate carrier histidine, and the C-terminal domain the pyruvate binding site.</text>
</comment>
<comment type="PTM">
    <text evidence="4">Phosphorylated on Tyr-122 (PubMed:33376208). Phosphorylation on Tyr-122 is important for polar localization but not for interaction with TmaR and for activity (PubMed:33376208).</text>
</comment>
<comment type="miscellaneous">
    <text evidence="3">The reaction takes place in three steps, mediated by a phosphocarrier histidine residue located on the surface of the central domain. The two first partial reactions are catalyzed at an active site located on the N-terminal domain, and the third partial reaction is catalyzed at an active site located on the C-terminal domain. For catalytic turnover, the central domain swivels from the concave surface of the N-terminal domain to that of the C-terminal domain.</text>
</comment>
<comment type="miscellaneous">
    <text evidence="5">Enzyme I of the sugar PTS has been shown to phosphorylate NPr of the nitrogen-metabolic PTS, though much less efficiently than it does HPr. This process may link carbon and nitrogen assimilation.</text>
</comment>
<comment type="similarity">
    <text evidence="7">Belongs to the PEP-utilizing enzyme family.</text>
</comment>
<dbReference type="EC" id="2.7.3.9" evidence="2"/>
<dbReference type="EMBL" id="J02796">
    <property type="protein sequence ID" value="AAA24441.1"/>
    <property type="molecule type" value="Genomic_DNA"/>
</dbReference>
<dbReference type="EMBL" id="M10425">
    <property type="protein sequence ID" value="AAA24439.1"/>
    <property type="molecule type" value="Genomic_DNA"/>
</dbReference>
<dbReference type="EMBL" id="U00096">
    <property type="protein sequence ID" value="AAC75469.1"/>
    <property type="molecule type" value="Genomic_DNA"/>
</dbReference>
<dbReference type="EMBL" id="AP009048">
    <property type="protein sequence ID" value="BAA16290.1"/>
    <property type="molecule type" value="Genomic_DNA"/>
</dbReference>
<dbReference type="EMBL" id="M21994">
    <property type="protein sequence ID" value="AAA24385.1"/>
    <property type="molecule type" value="Genomic_DNA"/>
</dbReference>
<dbReference type="EMBL" id="M21451">
    <property type="protein sequence ID" value="AAA23656.1"/>
    <property type="molecule type" value="Genomic_DNA"/>
</dbReference>
<dbReference type="PIR" id="B29785">
    <property type="entry name" value="WQECPI"/>
</dbReference>
<dbReference type="RefSeq" id="NP_416911.1">
    <property type="nucleotide sequence ID" value="NC_000913.3"/>
</dbReference>
<dbReference type="RefSeq" id="WP_000623140.1">
    <property type="nucleotide sequence ID" value="NZ_LN832404.1"/>
</dbReference>
<dbReference type="PDB" id="1EZA">
    <property type="method" value="NMR"/>
    <property type="chains" value="A=1-258"/>
</dbReference>
<dbReference type="PDB" id="1EZB">
    <property type="method" value="NMR"/>
    <property type="chains" value="A=1-258"/>
</dbReference>
<dbReference type="PDB" id="1EZC">
    <property type="method" value="NMR"/>
    <property type="chains" value="A=1-258"/>
</dbReference>
<dbReference type="PDB" id="1EZD">
    <property type="method" value="NMR"/>
    <property type="chains" value="A=1-258"/>
</dbReference>
<dbReference type="PDB" id="1ZYM">
    <property type="method" value="X-ray"/>
    <property type="resolution" value="2.50 A"/>
    <property type="chains" value="A/B=1-258"/>
</dbReference>
<dbReference type="PDB" id="2EZA">
    <property type="method" value="NMR"/>
    <property type="chains" value="A=1-258"/>
</dbReference>
<dbReference type="PDB" id="2EZB">
    <property type="method" value="NMR"/>
    <property type="chains" value="A=1-258"/>
</dbReference>
<dbReference type="PDB" id="2EZC">
    <property type="method" value="NMR"/>
    <property type="chains" value="A=1-258"/>
</dbReference>
<dbReference type="PDB" id="2HWG">
    <property type="method" value="X-ray"/>
    <property type="resolution" value="2.70 A"/>
    <property type="chains" value="A/B=1-575"/>
</dbReference>
<dbReference type="PDB" id="2KX9">
    <property type="method" value="Other"/>
    <property type="chains" value="A/B=1-573"/>
</dbReference>
<dbReference type="PDB" id="2L5H">
    <property type="method" value="Other"/>
    <property type="chains" value="A/B=1-573"/>
</dbReference>
<dbReference type="PDB" id="2MP0">
    <property type="method" value="NMR"/>
    <property type="chains" value="A=1-258"/>
</dbReference>
<dbReference type="PDB" id="2N5T">
    <property type="method" value="Other"/>
    <property type="chains" value="A/B=1-575"/>
</dbReference>
<dbReference type="PDB" id="2XDF">
    <property type="method" value="Other"/>
    <property type="chains" value="A/B=1-573"/>
</dbReference>
<dbReference type="PDB" id="3EZA">
    <property type="method" value="NMR"/>
    <property type="chains" value="A=1-249"/>
</dbReference>
<dbReference type="PDB" id="3EZB">
    <property type="method" value="NMR"/>
    <property type="chains" value="A=1-258"/>
</dbReference>
<dbReference type="PDB" id="3EZE">
    <property type="method" value="NMR"/>
    <property type="chains" value="A=1-258"/>
</dbReference>
<dbReference type="PDB" id="6V9K">
    <property type="method" value="X-ray"/>
    <property type="resolution" value="1.90 A"/>
    <property type="chains" value="A/B=261-575"/>
</dbReference>
<dbReference type="PDB" id="6VU0">
    <property type="method" value="X-ray"/>
    <property type="resolution" value="3.50 A"/>
    <property type="chains" value="A/B=261-575"/>
</dbReference>
<dbReference type="PDBsum" id="1EZA"/>
<dbReference type="PDBsum" id="1EZB"/>
<dbReference type="PDBsum" id="1EZC"/>
<dbReference type="PDBsum" id="1EZD"/>
<dbReference type="PDBsum" id="1ZYM"/>
<dbReference type="PDBsum" id="2EZA"/>
<dbReference type="PDBsum" id="2EZB"/>
<dbReference type="PDBsum" id="2EZC"/>
<dbReference type="PDBsum" id="2HWG"/>
<dbReference type="PDBsum" id="2KX9"/>
<dbReference type="PDBsum" id="2L5H"/>
<dbReference type="PDBsum" id="2MP0"/>
<dbReference type="PDBsum" id="2N5T"/>
<dbReference type="PDBsum" id="2XDF"/>
<dbReference type="PDBsum" id="3EZA"/>
<dbReference type="PDBsum" id="3EZB"/>
<dbReference type="PDBsum" id="3EZE"/>
<dbReference type="PDBsum" id="6V9K"/>
<dbReference type="PDBsum" id="6VU0"/>
<dbReference type="BMRB" id="P08839"/>
<dbReference type="SMR" id="P08839"/>
<dbReference type="BioGRID" id="4260570">
    <property type="interactions" value="528"/>
</dbReference>
<dbReference type="BioGRID" id="851219">
    <property type="interactions" value="3"/>
</dbReference>
<dbReference type="DIP" id="DIP-10603N"/>
<dbReference type="FunCoup" id="P08839">
    <property type="interactions" value="521"/>
</dbReference>
<dbReference type="IntAct" id="P08839">
    <property type="interactions" value="14"/>
</dbReference>
<dbReference type="MINT" id="P08839"/>
<dbReference type="STRING" id="511145.b2416"/>
<dbReference type="TCDB" id="8.A.7.1.1">
    <property type="family name" value="the phosphotransferase system enzyme i (ei) family"/>
</dbReference>
<dbReference type="iPTMnet" id="P08839"/>
<dbReference type="jPOST" id="P08839"/>
<dbReference type="PaxDb" id="511145-b2416"/>
<dbReference type="EnsemblBacteria" id="AAC75469">
    <property type="protein sequence ID" value="AAC75469"/>
    <property type="gene ID" value="b2416"/>
</dbReference>
<dbReference type="GeneID" id="946879"/>
<dbReference type="KEGG" id="ecj:JW2409"/>
<dbReference type="KEGG" id="eco:b2416"/>
<dbReference type="KEGG" id="ecoc:C3026_13430"/>
<dbReference type="PATRIC" id="fig|1411691.4.peg.4315"/>
<dbReference type="EchoBASE" id="EB0782"/>
<dbReference type="eggNOG" id="COG1080">
    <property type="taxonomic scope" value="Bacteria"/>
</dbReference>
<dbReference type="HOGENOM" id="CLU_007308_7_0_6"/>
<dbReference type="InParanoid" id="P08839"/>
<dbReference type="OMA" id="RMFANDH"/>
<dbReference type="OrthoDB" id="9765468at2"/>
<dbReference type="PhylomeDB" id="P08839"/>
<dbReference type="BioCyc" id="EcoCyc:PTSI-MONOMER"/>
<dbReference type="BioCyc" id="MetaCyc:PTSI-MONOMER"/>
<dbReference type="BRENDA" id="2.7.3.9">
    <property type="organism ID" value="2026"/>
</dbReference>
<dbReference type="SABIO-RK" id="P08839"/>
<dbReference type="EvolutionaryTrace" id="P08839"/>
<dbReference type="PRO" id="PR:P08839"/>
<dbReference type="Proteomes" id="UP000000625">
    <property type="component" value="Chromosome"/>
</dbReference>
<dbReference type="GO" id="GO:0005829">
    <property type="term" value="C:cytosol"/>
    <property type="evidence" value="ECO:0007005"/>
    <property type="project" value="UniProtKB"/>
</dbReference>
<dbReference type="GO" id="GO:0042802">
    <property type="term" value="F:identical protein binding"/>
    <property type="evidence" value="ECO:0000353"/>
    <property type="project" value="IntAct"/>
</dbReference>
<dbReference type="GO" id="GO:0016301">
    <property type="term" value="F:kinase activity"/>
    <property type="evidence" value="ECO:0007669"/>
    <property type="project" value="UniProtKB-KW"/>
</dbReference>
<dbReference type="GO" id="GO:0046872">
    <property type="term" value="F:metal ion binding"/>
    <property type="evidence" value="ECO:0007669"/>
    <property type="project" value="UniProtKB-KW"/>
</dbReference>
<dbReference type="GO" id="GO:0008965">
    <property type="term" value="F:phosphoenolpyruvate-protein phosphotransferase activity"/>
    <property type="evidence" value="ECO:0000318"/>
    <property type="project" value="GO_Central"/>
</dbReference>
<dbReference type="GO" id="GO:0015764">
    <property type="term" value="P:N-acetylglucosamine transport"/>
    <property type="evidence" value="ECO:0000318"/>
    <property type="project" value="GO_Central"/>
</dbReference>
<dbReference type="GO" id="GO:0009401">
    <property type="term" value="P:phosphoenolpyruvate-dependent sugar phosphotransferase system"/>
    <property type="evidence" value="ECO:0007669"/>
    <property type="project" value="UniProtKB-KW"/>
</dbReference>
<dbReference type="FunFam" id="1.10.274.10:FF:000001">
    <property type="entry name" value="Phosphoenolpyruvate-protein phosphotransferase"/>
    <property type="match status" value="1"/>
</dbReference>
<dbReference type="FunFam" id="3.20.20.60:FF:000007">
    <property type="entry name" value="Phosphoenolpyruvate-protein phosphotransferase"/>
    <property type="match status" value="1"/>
</dbReference>
<dbReference type="FunFam" id="3.50.30.10:FF:000001">
    <property type="entry name" value="Phosphoenolpyruvate-protein phosphotransferase"/>
    <property type="match status" value="1"/>
</dbReference>
<dbReference type="Gene3D" id="3.20.20.60">
    <property type="entry name" value="Phosphoenolpyruvate-binding domains"/>
    <property type="match status" value="1"/>
</dbReference>
<dbReference type="Gene3D" id="3.50.30.10">
    <property type="entry name" value="Phosphohistidine domain"/>
    <property type="match status" value="1"/>
</dbReference>
<dbReference type="Gene3D" id="1.10.274.10">
    <property type="entry name" value="PtsI, HPr-binding domain"/>
    <property type="match status" value="1"/>
</dbReference>
<dbReference type="InterPro" id="IPR008279">
    <property type="entry name" value="PEP-util_enz_mobile_dom"/>
</dbReference>
<dbReference type="InterPro" id="IPR050499">
    <property type="entry name" value="PEP-utilizing_PTS_enzyme"/>
</dbReference>
<dbReference type="InterPro" id="IPR018274">
    <property type="entry name" value="PEP_util_AS"/>
</dbReference>
<dbReference type="InterPro" id="IPR000121">
    <property type="entry name" value="PEP_util_C"/>
</dbReference>
<dbReference type="InterPro" id="IPR023151">
    <property type="entry name" value="PEP_util_CS"/>
</dbReference>
<dbReference type="InterPro" id="IPR036637">
    <property type="entry name" value="Phosphohistidine_dom_sf"/>
</dbReference>
<dbReference type="InterPro" id="IPR024692">
    <property type="entry name" value="PTS_EI"/>
</dbReference>
<dbReference type="InterPro" id="IPR006318">
    <property type="entry name" value="PTS_EI-like"/>
</dbReference>
<dbReference type="InterPro" id="IPR008731">
    <property type="entry name" value="PTS_EIN"/>
</dbReference>
<dbReference type="InterPro" id="IPR036618">
    <property type="entry name" value="PtsI_HPr-bd_sf"/>
</dbReference>
<dbReference type="InterPro" id="IPR015813">
    <property type="entry name" value="Pyrv/PenolPyrv_kinase-like_dom"/>
</dbReference>
<dbReference type="InterPro" id="IPR040442">
    <property type="entry name" value="Pyrv_kinase-like_dom_sf"/>
</dbReference>
<dbReference type="NCBIfam" id="NF008382">
    <property type="entry name" value="PRK11177.1"/>
    <property type="match status" value="1"/>
</dbReference>
<dbReference type="NCBIfam" id="TIGR01417">
    <property type="entry name" value="PTS_I_fam"/>
    <property type="match status" value="1"/>
</dbReference>
<dbReference type="PANTHER" id="PTHR46244">
    <property type="entry name" value="PHOSPHOENOLPYRUVATE-PROTEIN PHOSPHOTRANSFERASE"/>
    <property type="match status" value="1"/>
</dbReference>
<dbReference type="PANTHER" id="PTHR46244:SF6">
    <property type="entry name" value="PHOSPHOENOLPYRUVATE-PROTEIN PHOSPHOTRANSFERASE"/>
    <property type="match status" value="1"/>
</dbReference>
<dbReference type="Pfam" id="PF05524">
    <property type="entry name" value="PEP-utilisers_N"/>
    <property type="match status" value="1"/>
</dbReference>
<dbReference type="Pfam" id="PF00391">
    <property type="entry name" value="PEP-utilizers"/>
    <property type="match status" value="1"/>
</dbReference>
<dbReference type="Pfam" id="PF02896">
    <property type="entry name" value="PEP-utilizers_C"/>
    <property type="match status" value="1"/>
</dbReference>
<dbReference type="PIRSF" id="PIRSF000732">
    <property type="entry name" value="PTS_enzyme_I"/>
    <property type="match status" value="1"/>
</dbReference>
<dbReference type="PRINTS" id="PR01736">
    <property type="entry name" value="PHPHTRNFRASE"/>
</dbReference>
<dbReference type="SUPFAM" id="SSF47831">
    <property type="entry name" value="Enzyme I of the PEP:sugar phosphotransferase system HPr-binding (sub)domain"/>
    <property type="match status" value="1"/>
</dbReference>
<dbReference type="SUPFAM" id="SSF51621">
    <property type="entry name" value="Phosphoenolpyruvate/pyruvate domain"/>
    <property type="match status" value="1"/>
</dbReference>
<dbReference type="SUPFAM" id="SSF52009">
    <property type="entry name" value="Phosphohistidine domain"/>
    <property type="match status" value="1"/>
</dbReference>
<dbReference type="PROSITE" id="PS00742">
    <property type="entry name" value="PEP_ENZYMES_2"/>
    <property type="match status" value="1"/>
</dbReference>
<dbReference type="PROSITE" id="PS00370">
    <property type="entry name" value="PEP_ENZYMES_PHOS_SITE"/>
    <property type="match status" value="1"/>
</dbReference>
<proteinExistence type="evidence at protein level"/>